<proteinExistence type="predicted"/>
<dbReference type="EMBL" id="FO081350">
    <property type="protein sequence ID" value="CCD70951.1"/>
    <property type="molecule type" value="Genomic_DNA"/>
</dbReference>
<dbReference type="PIR" id="C56530">
    <property type="entry name" value="C56530"/>
</dbReference>
<dbReference type="PIR" id="T29011">
    <property type="entry name" value="T29011"/>
</dbReference>
<dbReference type="RefSeq" id="NP_498314.2">
    <property type="nucleotide sequence ID" value="NM_065913.5"/>
</dbReference>
<dbReference type="SMR" id="Q8TA81"/>
<dbReference type="FunCoup" id="Q8TA81">
    <property type="interactions" value="439"/>
</dbReference>
<dbReference type="PaxDb" id="6239-ZK328.6"/>
<dbReference type="EnsemblMetazoa" id="ZK328.6.1">
    <property type="protein sequence ID" value="ZK328.6.1"/>
    <property type="gene ID" value="WBGene00022695"/>
</dbReference>
<dbReference type="GeneID" id="175854"/>
<dbReference type="KEGG" id="cel:CELE_ZK328.6"/>
<dbReference type="UCSC" id="ZK328.6">
    <property type="organism name" value="c. elegans"/>
</dbReference>
<dbReference type="AGR" id="WB:WBGene00022695"/>
<dbReference type="CTD" id="175854"/>
<dbReference type="WormBase" id="ZK328.6">
    <property type="protein sequence ID" value="CE39536"/>
    <property type="gene ID" value="WBGene00022695"/>
</dbReference>
<dbReference type="eggNOG" id="ENOG502SMW5">
    <property type="taxonomic scope" value="Eukaryota"/>
</dbReference>
<dbReference type="HOGENOM" id="CLU_722064_0_0_1"/>
<dbReference type="InParanoid" id="Q8TA81"/>
<dbReference type="OMA" id="AKNITMR"/>
<dbReference type="OrthoDB" id="5860330at2759"/>
<dbReference type="PRO" id="PR:Q8TA81"/>
<dbReference type="Proteomes" id="UP000001940">
    <property type="component" value="Chromosome III"/>
</dbReference>
<dbReference type="Bgee" id="WBGene00022695">
    <property type="expression patterns" value="Expressed in pharyngeal muscle cell (C elegans) and 3 other cell types or tissues"/>
</dbReference>
<dbReference type="Gene3D" id="1.20.1280.50">
    <property type="match status" value="1"/>
</dbReference>
<dbReference type="InterPro" id="IPR036047">
    <property type="entry name" value="F-box-like_dom_sf"/>
</dbReference>
<dbReference type="InterPro" id="IPR001810">
    <property type="entry name" value="F-box_dom"/>
</dbReference>
<dbReference type="Pfam" id="PF00646">
    <property type="entry name" value="F-box"/>
    <property type="match status" value="1"/>
</dbReference>
<dbReference type="SMART" id="SM00256">
    <property type="entry name" value="FBOX"/>
    <property type="match status" value="1"/>
</dbReference>
<dbReference type="SUPFAM" id="SSF81383">
    <property type="entry name" value="F-box domain"/>
    <property type="match status" value="1"/>
</dbReference>
<dbReference type="PROSITE" id="PS50181">
    <property type="entry name" value="FBOX"/>
    <property type="match status" value="1"/>
</dbReference>
<feature type="chain" id="PRO_0000119982" description="Uncharacterized F-box protein ZK328.6">
    <location>
        <begin position="1"/>
        <end position="394"/>
    </location>
</feature>
<feature type="domain" description="F-box" evidence="1">
    <location>
        <begin position="7"/>
        <end position="51"/>
    </location>
</feature>
<name>YSYF_CAEEL</name>
<evidence type="ECO:0000255" key="1">
    <source>
        <dbReference type="PROSITE-ProRule" id="PRU00080"/>
    </source>
</evidence>
<sequence>MYTCGNRKVIPNMPDLILRKIFDQYDYPVLCKMERVCRRWTNIINSKFRKEIHEISIERLGSMFPQAHQCVPFRRLSISCPSDSHDFLAGVFRRSRLSFMKMTTDINFLAGIDQIHVSKDNGRRYFSNVEDLWLLMIHPDDDVTQRFLAIEGTLFSELQQLTLQVHVNPRYYKNVGEIVKSFILRYPKSNINLELHAEKSMHILNQISNLPSLPLYKIKLICTDFDQPQLRLDQLYAVMREQNIQAKNITMRDWSLFADGTTPVSYNPLDTFRISSCSIETVDNLVKSIQMTASQGTHVDGVPPTKKKKVIRKKKETEVVTEEGVLPKPKKKVVKKVVKKKKPIAFIKKLEVAGQCTLHGLTFLQQKAHTELERRLTTLVPGLDVDCSEIYYCW</sequence>
<accession>Q8TA81</accession>
<accession>Q23467</accession>
<reference key="1">
    <citation type="journal article" date="1998" name="Science">
        <title>Genome sequence of the nematode C. elegans: a platform for investigating biology.</title>
        <authorList>
            <consortium name="The C. elegans sequencing consortium"/>
        </authorList>
    </citation>
    <scope>NUCLEOTIDE SEQUENCE [LARGE SCALE GENOMIC DNA]</scope>
    <source>
        <strain>Bristol N2</strain>
    </source>
</reference>
<organism>
    <name type="scientific">Caenorhabditis elegans</name>
    <dbReference type="NCBI Taxonomy" id="6239"/>
    <lineage>
        <taxon>Eukaryota</taxon>
        <taxon>Metazoa</taxon>
        <taxon>Ecdysozoa</taxon>
        <taxon>Nematoda</taxon>
        <taxon>Chromadorea</taxon>
        <taxon>Rhabditida</taxon>
        <taxon>Rhabditina</taxon>
        <taxon>Rhabditomorpha</taxon>
        <taxon>Rhabditoidea</taxon>
        <taxon>Rhabditidae</taxon>
        <taxon>Peloderinae</taxon>
        <taxon>Caenorhabditis</taxon>
    </lineage>
</organism>
<keyword id="KW-1185">Reference proteome</keyword>
<keyword id="KW-0833">Ubl conjugation pathway</keyword>
<gene>
    <name type="ORF">ZK328.6</name>
</gene>
<protein>
    <recommendedName>
        <fullName>Uncharacterized F-box protein ZK328.6</fullName>
    </recommendedName>
</protein>